<comment type="function">
    <text evidence="1">Involved in lipopolysaccharide (LPS) biosynthesis. Translocates lipid A-core from the inner to the outer leaflet of the inner membrane. Transmembrane domains (TMD) form a pore in the inner membrane and the ATP-binding domain (NBD) is responsible for energy generation.</text>
</comment>
<comment type="catalytic activity">
    <reaction evidence="1">
        <text>ATP + H2O + lipid A-core oligosaccharideSide 1 = ADP + phosphate + lipid A-core oligosaccharideSide 2.</text>
        <dbReference type="EC" id="7.5.2.6"/>
    </reaction>
</comment>
<comment type="subunit">
    <text evidence="1">Homodimer.</text>
</comment>
<comment type="subcellular location">
    <subcellularLocation>
        <location evidence="1">Cell inner membrane</location>
        <topology evidence="1">Multi-pass membrane protein</topology>
    </subcellularLocation>
</comment>
<comment type="domain">
    <text evidence="1">In MsbA the ATP-binding domain (NBD) and the transmembrane domain (TMD) are fused.</text>
</comment>
<comment type="similarity">
    <text evidence="1">Belongs to the ABC transporter superfamily. Lipid exporter (TC 3.A.1.106) family.</text>
</comment>
<keyword id="KW-0067">ATP-binding</keyword>
<keyword id="KW-0997">Cell inner membrane</keyword>
<keyword id="KW-1003">Cell membrane</keyword>
<keyword id="KW-0445">Lipid transport</keyword>
<keyword id="KW-0472">Membrane</keyword>
<keyword id="KW-0547">Nucleotide-binding</keyword>
<keyword id="KW-1185">Reference proteome</keyword>
<keyword id="KW-1278">Translocase</keyword>
<keyword id="KW-0812">Transmembrane</keyword>
<keyword id="KW-1133">Transmembrane helix</keyword>
<keyword id="KW-0813">Transport</keyword>
<proteinExistence type="inferred from homology"/>
<protein>
    <recommendedName>
        <fullName evidence="1">ATP-dependent lipid A-core flippase</fullName>
        <ecNumber evidence="1">7.5.2.6</ecNumber>
    </recommendedName>
    <alternativeName>
        <fullName evidence="1">Lipid A export ATP-binding/permease protein MsbA</fullName>
    </alternativeName>
</protein>
<accession>Q3SFZ6</accession>
<gene>
    <name evidence="1" type="primary">msbA</name>
    <name type="ordered locus">Tbd_2507</name>
</gene>
<organism>
    <name type="scientific">Thiobacillus denitrificans (strain ATCC 25259 / T1)</name>
    <dbReference type="NCBI Taxonomy" id="292415"/>
    <lineage>
        <taxon>Bacteria</taxon>
        <taxon>Pseudomonadati</taxon>
        <taxon>Pseudomonadota</taxon>
        <taxon>Betaproteobacteria</taxon>
        <taxon>Nitrosomonadales</taxon>
        <taxon>Thiobacillaceae</taxon>
        <taxon>Thiobacillus</taxon>
    </lineage>
</organism>
<evidence type="ECO:0000255" key="1">
    <source>
        <dbReference type="HAMAP-Rule" id="MF_01703"/>
    </source>
</evidence>
<sequence>MSAPTSRHLYGRLLGYVKPHWRMFALSIVGLILTAATEPMLPALFKPLLDEGFVAKDQDFIRWVPLLLLGLFVLRGVASFISTYSMAWVGSRLVMDLRAAMFDKLMALPTRYFDQNPSGQLIAQLAFNVTQVTQSATSSLTTLVRDTVTVLGLLGYLVWLNWRLTLIVFALVPLTLWVVRVASKRLRGLSRKAQENIGDLTQVVDEAVGGHRVVKLYGGETYEQARFHRAANLARQFEMKRVAANAVYEPVIQFIAAIALAIIVFIAAGQASANTTTVGGFVAFFMAMLLLFAPLKRLTAVNDQLQRGLAASETIFALLDQDAERDTGTREPAHIEGRLAFRDVGLTYPGKQTPALARISLDIAPGETVALVGASGSGKTTLANLVPRFYDPDAGRIELDGVDIRDVKLQSLRGHIALVSQDVVLFNDTLAHNIAYGSKREASPDEIRAACVAAHAWDFIQAMPDGLDTLIGENGMRLSGGQRQRIAIARAILKNAPILILDEATSALDSESERHVQAALETLMQNRTTLVIAHRLSTIERANRIVVLEGGRIVETGAHADLLAKQGRYAQLHALQFSQ</sequence>
<name>MSBA_THIDA</name>
<dbReference type="EC" id="7.5.2.6" evidence="1"/>
<dbReference type="EMBL" id="CP000116">
    <property type="protein sequence ID" value="AAZ98460.1"/>
    <property type="molecule type" value="Genomic_DNA"/>
</dbReference>
<dbReference type="RefSeq" id="WP_011313019.1">
    <property type="nucleotide sequence ID" value="NC_007404.1"/>
</dbReference>
<dbReference type="SMR" id="Q3SFZ6"/>
<dbReference type="STRING" id="292415.Tbd_2507"/>
<dbReference type="KEGG" id="tbd:Tbd_2507"/>
<dbReference type="eggNOG" id="COG1132">
    <property type="taxonomic scope" value="Bacteria"/>
</dbReference>
<dbReference type="HOGENOM" id="CLU_000604_84_3_4"/>
<dbReference type="OrthoDB" id="8554730at2"/>
<dbReference type="Proteomes" id="UP000008291">
    <property type="component" value="Chromosome"/>
</dbReference>
<dbReference type="GO" id="GO:0005886">
    <property type="term" value="C:plasma membrane"/>
    <property type="evidence" value="ECO:0007669"/>
    <property type="project" value="UniProtKB-SubCell"/>
</dbReference>
<dbReference type="GO" id="GO:0015421">
    <property type="term" value="F:ABC-type oligopeptide transporter activity"/>
    <property type="evidence" value="ECO:0007669"/>
    <property type="project" value="TreeGrafter"/>
</dbReference>
<dbReference type="GO" id="GO:0005524">
    <property type="term" value="F:ATP binding"/>
    <property type="evidence" value="ECO:0007669"/>
    <property type="project" value="UniProtKB-KW"/>
</dbReference>
<dbReference type="GO" id="GO:0016887">
    <property type="term" value="F:ATP hydrolysis activity"/>
    <property type="evidence" value="ECO:0007669"/>
    <property type="project" value="InterPro"/>
</dbReference>
<dbReference type="GO" id="GO:0034040">
    <property type="term" value="F:ATPase-coupled lipid transmembrane transporter activity"/>
    <property type="evidence" value="ECO:0007669"/>
    <property type="project" value="InterPro"/>
</dbReference>
<dbReference type="CDD" id="cd18552">
    <property type="entry name" value="ABC_6TM_MsbA_like"/>
    <property type="match status" value="1"/>
</dbReference>
<dbReference type="CDD" id="cd03251">
    <property type="entry name" value="ABCC_MsbA"/>
    <property type="match status" value="1"/>
</dbReference>
<dbReference type="FunFam" id="3.40.50.300:FF:000140">
    <property type="entry name" value="Lipid A export ATP-binding/permease protein MsbA"/>
    <property type="match status" value="1"/>
</dbReference>
<dbReference type="Gene3D" id="1.20.1560.10">
    <property type="entry name" value="ABC transporter type 1, transmembrane domain"/>
    <property type="match status" value="1"/>
</dbReference>
<dbReference type="Gene3D" id="3.40.50.300">
    <property type="entry name" value="P-loop containing nucleotide triphosphate hydrolases"/>
    <property type="match status" value="1"/>
</dbReference>
<dbReference type="InterPro" id="IPR003593">
    <property type="entry name" value="AAA+_ATPase"/>
</dbReference>
<dbReference type="InterPro" id="IPR011527">
    <property type="entry name" value="ABC1_TM_dom"/>
</dbReference>
<dbReference type="InterPro" id="IPR036640">
    <property type="entry name" value="ABC1_TM_sf"/>
</dbReference>
<dbReference type="InterPro" id="IPR003439">
    <property type="entry name" value="ABC_transporter-like_ATP-bd"/>
</dbReference>
<dbReference type="InterPro" id="IPR017871">
    <property type="entry name" value="ABC_transporter-like_CS"/>
</dbReference>
<dbReference type="InterPro" id="IPR011917">
    <property type="entry name" value="ABC_transpr_lipidA"/>
</dbReference>
<dbReference type="InterPro" id="IPR027417">
    <property type="entry name" value="P-loop_NTPase"/>
</dbReference>
<dbReference type="InterPro" id="IPR039421">
    <property type="entry name" value="Type_1_exporter"/>
</dbReference>
<dbReference type="NCBIfam" id="TIGR02203">
    <property type="entry name" value="MsbA_lipidA"/>
    <property type="match status" value="1"/>
</dbReference>
<dbReference type="PANTHER" id="PTHR43394:SF1">
    <property type="entry name" value="ATP-BINDING CASSETTE SUB-FAMILY B MEMBER 10, MITOCHONDRIAL"/>
    <property type="match status" value="1"/>
</dbReference>
<dbReference type="PANTHER" id="PTHR43394">
    <property type="entry name" value="ATP-DEPENDENT PERMEASE MDL1, MITOCHONDRIAL"/>
    <property type="match status" value="1"/>
</dbReference>
<dbReference type="Pfam" id="PF00664">
    <property type="entry name" value="ABC_membrane"/>
    <property type="match status" value="1"/>
</dbReference>
<dbReference type="Pfam" id="PF00005">
    <property type="entry name" value="ABC_tran"/>
    <property type="match status" value="1"/>
</dbReference>
<dbReference type="SMART" id="SM00382">
    <property type="entry name" value="AAA"/>
    <property type="match status" value="1"/>
</dbReference>
<dbReference type="SUPFAM" id="SSF90123">
    <property type="entry name" value="ABC transporter transmembrane region"/>
    <property type="match status" value="1"/>
</dbReference>
<dbReference type="SUPFAM" id="SSF52540">
    <property type="entry name" value="P-loop containing nucleoside triphosphate hydrolases"/>
    <property type="match status" value="1"/>
</dbReference>
<dbReference type="PROSITE" id="PS50929">
    <property type="entry name" value="ABC_TM1F"/>
    <property type="match status" value="1"/>
</dbReference>
<dbReference type="PROSITE" id="PS00211">
    <property type="entry name" value="ABC_TRANSPORTER_1"/>
    <property type="match status" value="1"/>
</dbReference>
<dbReference type="PROSITE" id="PS50893">
    <property type="entry name" value="ABC_TRANSPORTER_2"/>
    <property type="match status" value="1"/>
</dbReference>
<dbReference type="PROSITE" id="PS51239">
    <property type="entry name" value="MSBA"/>
    <property type="match status" value="1"/>
</dbReference>
<reference key="1">
    <citation type="journal article" date="2006" name="J. Bacteriol.">
        <title>The genome sequence of the obligately chemolithoautotrophic, facultatively anaerobic bacterium Thiobacillus denitrificans.</title>
        <authorList>
            <person name="Beller H.R."/>
            <person name="Chain P.S."/>
            <person name="Letain T.E."/>
            <person name="Chakicherla A."/>
            <person name="Larimer F.W."/>
            <person name="Richardson P.M."/>
            <person name="Coleman M.A."/>
            <person name="Wood A.P."/>
            <person name="Kelly D.P."/>
        </authorList>
    </citation>
    <scope>NUCLEOTIDE SEQUENCE [LARGE SCALE GENOMIC DNA]</scope>
    <source>
        <strain>ATCC 25259 / T1</strain>
    </source>
</reference>
<feature type="chain" id="PRO_0000271661" description="ATP-dependent lipid A-core flippase">
    <location>
        <begin position="1"/>
        <end position="579"/>
    </location>
</feature>
<feature type="transmembrane region" description="Helical" evidence="1">
    <location>
        <begin position="24"/>
        <end position="44"/>
    </location>
</feature>
<feature type="transmembrane region" description="Helical" evidence="1">
    <location>
        <begin position="63"/>
        <end position="83"/>
    </location>
</feature>
<feature type="transmembrane region" description="Helical" evidence="1">
    <location>
        <begin position="150"/>
        <end position="170"/>
    </location>
</feature>
<feature type="transmembrane region" description="Helical" evidence="1">
    <location>
        <begin position="251"/>
        <end position="271"/>
    </location>
</feature>
<feature type="transmembrane region" description="Helical" evidence="1">
    <location>
        <begin position="275"/>
        <end position="295"/>
    </location>
</feature>
<feature type="domain" description="ABC transmembrane type-1" evidence="1">
    <location>
        <begin position="25"/>
        <end position="307"/>
    </location>
</feature>
<feature type="domain" description="ABC transporter" evidence="1">
    <location>
        <begin position="339"/>
        <end position="575"/>
    </location>
</feature>
<feature type="binding site" evidence="1">
    <location>
        <begin position="373"/>
        <end position="380"/>
    </location>
    <ligand>
        <name>ATP</name>
        <dbReference type="ChEBI" id="CHEBI:30616"/>
    </ligand>
</feature>